<sequence length="443" mass="51506">MDRLGPFSNDPSDKPPCRGCSSYLMEPYIKCAECGPPPFFLCLQCFTRGFEYKKHQSDHTYEIMTSDFPVLDPSWTAQEEMALLEAVMDCGFGNWQDVANQMCTKTKEECEKHYMKHFINNPLFASTLLNLKQAEEAKTADTAIPFHSTDDPPRPTFDSLLSRDMAGYMPARADFIEEFDNYAEWDLRDIDFVEDDSDILHALKMAVVDIYHSRLKERQRRKKIIRDHGLINLRKFQLMERRYPKEVQDLYETMRRFARIVGPVEHDKFIESHALEFELRREIKRLQEYRTAGITNFCSARTYDHLKKTREEERLKRTMLSEVLQYIQDSSACQQWLRRQADIDSGLSPSIPMASNSGRRSAPPLNLTGLPGTEKLNEKEKELCQMVRLVPGAYLEYKSALLNECNKQGGLRLAQARALIKIDVNKTRKIYDFLIREGYITKG</sequence>
<evidence type="ECO:0000250" key="1"/>
<evidence type="ECO:0000250" key="2">
    <source>
        <dbReference type="UniProtKB" id="Q8CHV6"/>
    </source>
</evidence>
<evidence type="ECO:0000255" key="3">
    <source>
        <dbReference type="PROSITE-ProRule" id="PRU00228"/>
    </source>
</evidence>
<evidence type="ECO:0000255" key="4">
    <source>
        <dbReference type="PROSITE-ProRule" id="PRU00247"/>
    </source>
</evidence>
<evidence type="ECO:0000255" key="5">
    <source>
        <dbReference type="PROSITE-ProRule" id="PRU00624"/>
    </source>
</evidence>
<evidence type="ECO:0000256" key="6">
    <source>
        <dbReference type="SAM" id="MobiDB-lite"/>
    </source>
</evidence>
<evidence type="ECO:0000269" key="7">
    <source>
    </source>
</evidence>
<evidence type="ECO:0000269" key="8">
    <source>
    </source>
</evidence>
<evidence type="ECO:0000269" key="9">
    <source>
    </source>
</evidence>
<evidence type="ECO:0000269" key="10">
    <source>
    </source>
</evidence>
<evidence type="ECO:0000269" key="11">
    <source>
    </source>
</evidence>
<evidence type="ECO:0000269" key="12">
    <source>
    </source>
</evidence>
<evidence type="ECO:0000269" key="13">
    <source>
    </source>
</evidence>
<evidence type="ECO:0000269" key="14">
    <source ref="2"/>
</evidence>
<evidence type="ECO:0000303" key="15">
    <source>
    </source>
</evidence>
<evidence type="ECO:0000305" key="16"/>
<evidence type="ECO:0007744" key="17">
    <source>
    </source>
</evidence>
<evidence type="ECO:0007744" key="18">
    <source>
    </source>
</evidence>
<evidence type="ECO:0007829" key="19">
    <source>
        <dbReference type="PDB" id="1X41"/>
    </source>
</evidence>
<organism>
    <name type="scientific">Homo sapiens</name>
    <name type="common">Human</name>
    <dbReference type="NCBI Taxonomy" id="9606"/>
    <lineage>
        <taxon>Eukaryota</taxon>
        <taxon>Metazoa</taxon>
        <taxon>Chordata</taxon>
        <taxon>Craniata</taxon>
        <taxon>Vertebrata</taxon>
        <taxon>Euteleostomi</taxon>
        <taxon>Mammalia</taxon>
        <taxon>Eutheria</taxon>
        <taxon>Euarchontoglires</taxon>
        <taxon>Primates</taxon>
        <taxon>Haplorrhini</taxon>
        <taxon>Catarrhini</taxon>
        <taxon>Hominidae</taxon>
        <taxon>Homo</taxon>
    </lineage>
</organism>
<gene>
    <name type="primary">TADA2A</name>
    <name type="synonym">TADA2L</name>
    <name type="ORF">KL04P</name>
</gene>
<name>TAD2A_HUMAN</name>
<keyword id="KW-0002">3D-structure</keyword>
<keyword id="KW-0025">Alternative splicing</keyword>
<keyword id="KW-0158">Chromosome</keyword>
<keyword id="KW-0238">DNA-binding</keyword>
<keyword id="KW-1017">Isopeptide bond</keyword>
<keyword id="KW-0479">Metal-binding</keyword>
<keyword id="KW-0539">Nucleus</keyword>
<keyword id="KW-0597">Phosphoprotein</keyword>
<keyword id="KW-1267">Proteomics identification</keyword>
<keyword id="KW-1185">Reference proteome</keyword>
<keyword id="KW-0804">Transcription</keyword>
<keyword id="KW-0805">Transcription regulation</keyword>
<keyword id="KW-0832">Ubl conjugation</keyword>
<keyword id="KW-0862">Zinc</keyword>
<keyword id="KW-0863">Zinc-finger</keyword>
<comment type="function">
    <text evidence="2 9 10">Component of the ATAC complex, a complex with histone acetyltransferase activity on histones H3 and H4. Required for the function of some acidic activation domains, which activate transcription from a distant site (By similarity). Binds double-stranded DNA. Binds dinucleosomes, probably at the linker region between neighboring nucleosomes. Plays a role in chromatin remodeling. May promote TP53/p53 'Lys-321' acetylation, leading to reduced TP53 stability and transcriptional activity (PubMed:22644376). May also promote XRCC6 acetylation thus facilitating cell apoptosis in response to DNA damage (PubMed:22644376).</text>
</comment>
<comment type="subunit">
    <text evidence="9 10 12 13">Interacts with GCN5 and NR3C1. Associated with the P/CAF protein in the PCAF complex. Component of the PCAF complex, at least composed of TADA2L/ADA2, TADA3L/ADA3, TAF5L/PAF65-beta, TAF6L/PAF65-alpha, TAF10/TAFII30, TAF12/TAFII20, TAF9/TAFII31 and TRRAP. Component of the ADA2A-containing complex (ATAC), composed of KAT14, KAT2A, TADA2L, TADA3L, ZZ3, MBIP, WDR5, YEATS2, CCDC101 and DR1. Interacts with CCDC134 (PubMed:22644376).</text>
</comment>
<comment type="interaction">
    <interactant intactId="EBI-742268">
        <id>O75478</id>
    </interactant>
    <interactant intactId="EBI-372428">
        <id>Q9NY61</id>
        <label>AATF</label>
    </interactant>
    <organismsDiffer>false</organismsDiffer>
    <experiments>4</experiments>
</comment>
<comment type="interaction">
    <interactant intactId="EBI-742268">
        <id>O75478</id>
    </interactant>
    <interactant intactId="EBI-8643161">
        <id>Q9NX04</id>
        <label>AIRIM</label>
    </interactant>
    <organismsDiffer>false</organismsDiffer>
    <experiments>6</experiments>
</comment>
<comment type="interaction">
    <interactant intactId="EBI-742268">
        <id>O75478</id>
    </interactant>
    <interactant intactId="EBI-744311">
        <id>Q8IYX3</id>
        <label>CCDC116</label>
    </interactant>
    <organismsDiffer>false</organismsDiffer>
    <experiments>5</experiments>
</comment>
<comment type="interaction">
    <interactant intactId="EBI-742268">
        <id>O75478</id>
    </interactant>
    <interactant intactId="EBI-953766">
        <id>Q9H6E4</id>
        <label>CCDC134</label>
    </interactant>
    <organismsDiffer>false</organismsDiffer>
    <experiments>6</experiments>
</comment>
<comment type="interaction">
    <interactant intactId="EBI-742268">
        <id>O75478</id>
    </interactant>
    <interactant intactId="EBI-10175300">
        <id>Q8TD31-3</id>
        <label>CCHCR1</label>
    </interactant>
    <organismsDiffer>false</organismsDiffer>
    <experiments>3</experiments>
</comment>
<comment type="interaction">
    <interactant intactId="EBI-742268">
        <id>O75478</id>
    </interactant>
    <interactant intactId="EBI-5278764">
        <id>Q96GN5</id>
        <label>CDCA7L</label>
    </interactant>
    <organismsDiffer>false</organismsDiffer>
    <experiments>3</experiments>
</comment>
<comment type="interaction">
    <interactant intactId="EBI-742268">
        <id>O75478</id>
    </interactant>
    <interactant intactId="EBI-398610">
        <id>O60573</id>
        <label>EIF4E2</label>
    </interactant>
    <organismsDiffer>false</organismsDiffer>
    <experiments>3</experiments>
</comment>
<comment type="interaction">
    <interactant intactId="EBI-742268">
        <id>O75478</id>
    </interactant>
    <interactant intactId="EBI-16438045">
        <id>A0A0S2Z3R2</id>
        <label>FANCG</label>
    </interactant>
    <organismsDiffer>false</organismsDiffer>
    <experiments>3</experiments>
</comment>
<comment type="interaction">
    <interactant intactId="EBI-742268">
        <id>O75478</id>
    </interactant>
    <interactant intactId="EBI-16433879">
        <id>A0A0S2Z4A7</id>
        <label>FANCG</label>
    </interactant>
    <organismsDiffer>false</organismsDiffer>
    <experiments>3</experiments>
</comment>
<comment type="interaction">
    <interactant intactId="EBI-742268">
        <id>O75478</id>
    </interactant>
    <interactant intactId="EBI-2513774">
        <id>O95363</id>
        <label>FARS2</label>
    </interactant>
    <organismsDiffer>false</organismsDiffer>
    <experiments>3</experiments>
</comment>
<comment type="interaction">
    <interactant intactId="EBI-742268">
        <id>O75478</id>
    </interactant>
    <interactant intactId="EBI-10244131">
        <id>Q8TES7-6</id>
        <label>FBF1</label>
    </interactant>
    <organismsDiffer>false</organismsDiffer>
    <experiments>3</experiments>
</comment>
<comment type="interaction">
    <interactant intactId="EBI-742268">
        <id>O75478</id>
    </interactant>
    <interactant intactId="EBI-347538">
        <id>Q9Y4H4</id>
        <label>GPSM3</label>
    </interactant>
    <organismsDiffer>false</organismsDiffer>
    <experiments>3</experiments>
</comment>
<comment type="interaction">
    <interactant intactId="EBI-742268">
        <id>O75478</id>
    </interactant>
    <interactant intactId="EBI-740220">
        <id>O14964</id>
        <label>HGS</label>
    </interactant>
    <organismsDiffer>false</organismsDiffer>
    <experiments>4</experiments>
</comment>
<comment type="interaction">
    <interactant intactId="EBI-742268">
        <id>O75478</id>
    </interactant>
    <interactant intactId="EBI-477622">
        <id>Q92830</id>
        <label>KAT2A</label>
    </interactant>
    <organismsDiffer>false</organismsDiffer>
    <experiments>5</experiments>
</comment>
<comment type="interaction">
    <interactant intactId="EBI-742268">
        <id>O75478</id>
    </interactant>
    <interactant intactId="EBI-949319">
        <id>Q9NSK0</id>
        <label>KLC4</label>
    </interactant>
    <organismsDiffer>false</organismsDiffer>
    <experiments>3</experiments>
</comment>
<comment type="interaction">
    <interactant intactId="EBI-742268">
        <id>O75478</id>
    </interactant>
    <interactant intactId="EBI-6426443">
        <id>Q2WGJ6</id>
        <label>KLHL38</label>
    </interactant>
    <organismsDiffer>false</organismsDiffer>
    <experiments>3</experiments>
</comment>
<comment type="interaction">
    <interactant intactId="EBI-742268">
        <id>O75478</id>
    </interactant>
    <interactant intactId="EBI-349938">
        <id>P52292</id>
        <label>KPNA2</label>
    </interactant>
    <organismsDiffer>false</organismsDiffer>
    <experiments>3</experiments>
</comment>
<comment type="interaction">
    <interactant intactId="EBI-742268">
        <id>O75478</id>
    </interactant>
    <interactant intactId="EBI-8639312">
        <id>P25800</id>
        <label>LMO1</label>
    </interactant>
    <organismsDiffer>false</organismsDiffer>
    <experiments>3</experiments>
</comment>
<comment type="interaction">
    <interactant intactId="EBI-742268">
        <id>O75478</id>
    </interactant>
    <interactant intactId="EBI-299134">
        <id>P61326</id>
        <label>MAGOH</label>
    </interactant>
    <organismsDiffer>false</organismsDiffer>
    <experiments>3</experiments>
</comment>
<comment type="interaction">
    <interactant intactId="EBI-742268">
        <id>O75478</id>
    </interactant>
    <interactant intactId="EBI-746778">
        <id>Q96A72</id>
        <label>MAGOHB</label>
    </interactant>
    <organismsDiffer>false</organismsDiffer>
    <experiments>3</experiments>
</comment>
<comment type="interaction">
    <interactant intactId="EBI-742268">
        <id>O75478</id>
    </interactant>
    <interactant intactId="EBI-1048159">
        <id>P55081</id>
        <label>MFAP1</label>
    </interactant>
    <organismsDiffer>false</organismsDiffer>
    <experiments>3</experiments>
</comment>
<comment type="interaction">
    <interactant intactId="EBI-742268">
        <id>O75478</id>
    </interactant>
    <interactant intactId="EBI-2340269">
        <id>Q13064</id>
        <label>MKRN3</label>
    </interactant>
    <organismsDiffer>false</organismsDiffer>
    <experiments>3</experiments>
</comment>
<comment type="interaction">
    <interactant intactId="EBI-742268">
        <id>O75478</id>
    </interactant>
    <interactant intactId="EBI-7415268">
        <id>O75431</id>
        <label>MTX2</label>
    </interactant>
    <organismsDiffer>false</organismsDiffer>
    <experiments>3</experiments>
</comment>
<comment type="interaction">
    <interactant intactId="EBI-742268">
        <id>O75478</id>
    </interactant>
    <interactant intactId="EBI-2007911">
        <id>Q16236</id>
        <label>NFE2L2</label>
    </interactant>
    <organismsDiffer>false</organismsDiffer>
    <experiments>2</experiments>
</comment>
<comment type="interaction">
    <interactant intactId="EBI-742268">
        <id>O75478</id>
    </interactant>
    <interactant intactId="EBI-10293968">
        <id>Q96T49</id>
        <label>PPP1R16B</label>
    </interactant>
    <organismsDiffer>false</organismsDiffer>
    <experiments>3</experiments>
</comment>
<comment type="interaction">
    <interactant intactId="EBI-742268">
        <id>O75478</id>
    </interactant>
    <interactant intactId="EBI-1567797">
        <id>Q8WWY3</id>
        <label>PRPF31</label>
    </interactant>
    <organismsDiffer>false</organismsDiffer>
    <experiments>3</experiments>
</comment>
<comment type="interaction">
    <interactant intactId="EBI-742268">
        <id>O75478</id>
    </interactant>
    <interactant intactId="EBI-347462">
        <id>P47897</id>
        <label>QARS1</label>
    </interactant>
    <organismsDiffer>false</organismsDiffer>
    <experiments>3</experiments>
</comment>
<comment type="interaction">
    <interactant intactId="EBI-742268">
        <id>O75478</id>
    </interactant>
    <interactant intactId="EBI-16428950">
        <id>A0A0S2Z4G9</id>
        <label>RNF6</label>
    </interactant>
    <organismsDiffer>false</organismsDiffer>
    <experiments>3</experiments>
</comment>
<comment type="interaction">
    <interactant intactId="EBI-742268">
        <id>O75478</id>
    </interactant>
    <interactant intactId="EBI-10238588">
        <id>Q17RB0</id>
        <label>RTL8B</label>
    </interactant>
    <organismsDiffer>false</organismsDiffer>
    <experiments>3</experiments>
</comment>
<comment type="interaction">
    <interactant intactId="EBI-742268">
        <id>O75478</id>
    </interactant>
    <interactant intactId="EBI-1051880">
        <id>Q12874</id>
        <label>SF3A3</label>
    </interactant>
    <organismsDiffer>false</organismsDiffer>
    <experiments>3</experiments>
</comment>
<comment type="interaction">
    <interactant intactId="EBI-742268">
        <id>O75478</id>
    </interactant>
    <interactant intactId="EBI-473249">
        <id>O75528</id>
        <label>TADA3</label>
    </interactant>
    <organismsDiffer>false</organismsDiffer>
    <experiments>4</experiments>
</comment>
<comment type="interaction">
    <interactant intactId="EBI-742268">
        <id>O75478</id>
    </interactant>
    <interactant intactId="EBI-750487">
        <id>Q8WW24</id>
        <label>TEKT4</label>
    </interactant>
    <organismsDiffer>false</organismsDiffer>
    <experiments>3</experiments>
</comment>
<comment type="interaction">
    <interactant intactId="EBI-742268">
        <id>O75478</id>
    </interactant>
    <interactant intactId="EBI-1765605">
        <id>Q96FV9</id>
        <label>THOC1</label>
    </interactant>
    <organismsDiffer>false</organismsDiffer>
    <experiments>3</experiments>
</comment>
<comment type="interaction">
    <interactant intactId="EBI-742268">
        <id>O75478</id>
    </interactant>
    <interactant intactId="EBI-6447954">
        <id>Q5W5X9</id>
        <label>TTC23</label>
    </interactant>
    <organismsDiffer>false</organismsDiffer>
    <experiments>3</experiments>
</comment>
<comment type="interaction">
    <interactant intactId="EBI-742268">
        <id>O75478</id>
    </interactant>
    <interactant intactId="EBI-2851213">
        <id>Q8N5M4</id>
        <label>TTC9C</label>
    </interactant>
    <organismsDiffer>false</organismsDiffer>
    <experiments>3</experiments>
</comment>
<comment type="interaction">
    <interactant intactId="EBI-742268">
        <id>O75478</id>
    </interactant>
    <interactant intactId="EBI-741945">
        <id>Q9BRG1</id>
        <label>VPS25</label>
    </interactant>
    <organismsDiffer>false</organismsDiffer>
    <experiments>3</experiments>
</comment>
<comment type="interaction">
    <interactant intactId="EBI-742268">
        <id>O75478</id>
    </interactant>
    <interactant intactId="EBI-748373">
        <id>Q6PEW1</id>
        <label>ZCCHC12</label>
    </interactant>
    <organismsDiffer>false</organismsDiffer>
    <experiments>3</experiments>
</comment>
<comment type="interaction">
    <interactant intactId="EBI-742268">
        <id>O75478</id>
    </interactant>
    <interactant intactId="EBI-8656416">
        <id>Q68DK2-5</id>
        <label>ZFYVE26</label>
    </interactant>
    <organismsDiffer>false</organismsDiffer>
    <experiments>3</experiments>
</comment>
<comment type="interaction">
    <interactant intactId="EBI-742268">
        <id>O75478</id>
    </interactant>
    <interactant intactId="EBI-740727">
        <id>Q8TAU3</id>
        <label>ZNF417</label>
    </interactant>
    <organismsDiffer>false</organismsDiffer>
    <experiments>3</experiments>
</comment>
<comment type="interaction">
    <interactant intactId="EBI-742268">
        <id>O75478</id>
    </interactant>
    <interactant intactId="EBI-10273713">
        <id>Q8TBZ8</id>
        <label>ZNF564</label>
    </interactant>
    <organismsDiffer>false</organismsDiffer>
    <experiments>3</experiments>
</comment>
<comment type="interaction">
    <interactant intactId="EBI-742268">
        <id>O75478</id>
    </interactant>
    <interactant intactId="EBI-16429014">
        <id>A0A0S2Z5X4</id>
        <label>ZNF688</label>
    </interactant>
    <organismsDiffer>false</organismsDiffer>
    <experiments>3</experiments>
</comment>
<comment type="interaction">
    <interactant intactId="EBI-742268">
        <id>O75478</id>
    </interactant>
    <interactant intactId="EBI-10248148">
        <id>Q5W150</id>
    </interactant>
    <organismsDiffer>false</organismsDiffer>
    <experiments>3</experiments>
</comment>
<comment type="interaction">
    <interactant intactId="EBI-16433586">
        <id>O75478-2</id>
    </interactant>
    <interactant intactId="EBI-740220">
        <id>O14964</id>
        <label>HGS</label>
    </interactant>
    <organismsDiffer>false</organismsDiffer>
    <experiments>3</experiments>
</comment>
<comment type="subcellular location">
    <subcellularLocation>
        <location evidence="10">Nucleus</location>
    </subcellularLocation>
    <subcellularLocation>
        <location evidence="2">Chromosome</location>
    </subcellularLocation>
</comment>
<comment type="alternative products">
    <event type="alternative splicing"/>
    <isoform>
        <id>O75478-1</id>
        <name>1</name>
        <sequence type="displayed"/>
    </isoform>
    <isoform>
        <id>O75478-2</id>
        <name>2</name>
        <sequence type="described" ref="VSP_040347 VSP_040348"/>
    </isoform>
</comment>
<comment type="tissue specificity">
    <text>Expressed in all tissues, but most abundantly in testis.</text>
</comment>
<accession>O75478</accession>
<accession>A8MVD0</accession>
<accession>B3KMU9</accession>
<accession>Q9BVJ0</accession>
<accession>Q9UCW2</accession>
<accession>Q9UP49</accession>
<feature type="chain" id="PRO_0000197083" description="Transcriptional adapter 2-alpha">
    <location>
        <begin position="1"/>
        <end position="443"/>
    </location>
</feature>
<feature type="domain" description="SANT" evidence="5">
    <location>
        <begin position="70"/>
        <end position="122"/>
    </location>
</feature>
<feature type="domain" description="SWIRM" evidence="4">
    <location>
        <begin position="356"/>
        <end position="443"/>
    </location>
</feature>
<feature type="zinc finger region" description="ZZ-type" evidence="3">
    <location>
        <begin position="12"/>
        <end position="69"/>
    </location>
</feature>
<feature type="DNA-binding region" evidence="1">
    <location>
        <begin position="426"/>
        <end position="435"/>
    </location>
</feature>
<feature type="region of interest" description="Disordered" evidence="6">
    <location>
        <begin position="348"/>
        <end position="372"/>
    </location>
</feature>
<feature type="binding site" evidence="3">
    <location>
        <position position="17"/>
    </location>
    <ligand>
        <name>Zn(2+)</name>
        <dbReference type="ChEBI" id="CHEBI:29105"/>
        <label>1</label>
    </ligand>
</feature>
<feature type="binding site" evidence="3">
    <location>
        <position position="20"/>
    </location>
    <ligand>
        <name>Zn(2+)</name>
        <dbReference type="ChEBI" id="CHEBI:29105"/>
        <label>1</label>
    </ligand>
</feature>
<feature type="binding site" evidence="3">
    <location>
        <position position="31"/>
    </location>
    <ligand>
        <name>Zn(2+)</name>
        <dbReference type="ChEBI" id="CHEBI:29105"/>
        <label>2</label>
    </ligand>
</feature>
<feature type="binding site" evidence="3">
    <location>
        <position position="34"/>
    </location>
    <ligand>
        <name>Zn(2+)</name>
        <dbReference type="ChEBI" id="CHEBI:29105"/>
        <label>2</label>
    </ligand>
</feature>
<feature type="binding site" evidence="3">
    <location>
        <position position="42"/>
    </location>
    <ligand>
        <name>Zn(2+)</name>
        <dbReference type="ChEBI" id="CHEBI:29105"/>
        <label>1</label>
    </ligand>
</feature>
<feature type="binding site" evidence="3">
    <location>
        <position position="45"/>
    </location>
    <ligand>
        <name>Zn(2+)</name>
        <dbReference type="ChEBI" id="CHEBI:29105"/>
        <label>1</label>
    </ligand>
</feature>
<feature type="binding site" evidence="3">
    <location>
        <position position="55"/>
    </location>
    <ligand>
        <name>Zn(2+)</name>
        <dbReference type="ChEBI" id="CHEBI:29105"/>
        <label>2</label>
    </ligand>
</feature>
<feature type="binding site" evidence="3">
    <location>
        <position position="59"/>
    </location>
    <ligand>
        <name>Zn(2+)</name>
        <dbReference type="ChEBI" id="CHEBI:29105"/>
        <label>2</label>
    </ligand>
</feature>
<feature type="modified residue" description="Phosphoserine; in variant Ser-6" evidence="17">
    <location>
        <position position="6"/>
    </location>
</feature>
<feature type="cross-link" description="Glycyl lysine isopeptide (Lys-Gly) (interchain with G-Cter in SUMO2)" evidence="18">
    <location>
        <position position="132"/>
    </location>
</feature>
<feature type="cross-link" description="Glycyl lysine isopeptide (Lys-Gly) (interchain with G-Cter in SUMO2)" evidence="18">
    <location>
        <position position="138"/>
    </location>
</feature>
<feature type="splice variant" id="VSP_040347" description="In isoform 2." evidence="15">
    <original>LEFELRREIKRLQEYRTAGITNFCSARTYDH</original>
    <variation>CRWFLSLEQYLCVYIYINRRDNGVFYVKFYK</variation>
    <location>
        <begin position="275"/>
        <end position="305"/>
    </location>
</feature>
<feature type="splice variant" id="VSP_040348" description="In isoform 2." evidence="15">
    <location>
        <begin position="306"/>
        <end position="443"/>
    </location>
</feature>
<feature type="sequence variant" id="VAR_047466" description="In dbSNP:rs7211875." evidence="7 8 11 14 17">
    <original>P</original>
    <variation>S</variation>
    <location>
        <position position="6"/>
    </location>
</feature>
<feature type="sequence variant" id="VAR_047467" description="In dbSNP:rs1054865." evidence="7">
    <original>M</original>
    <variation>V</variation>
    <location>
        <position position="115"/>
    </location>
</feature>
<feature type="sequence variant" id="VAR_047468" description="In dbSNP:rs2522969.">
    <original>I</original>
    <variation>M</variation>
    <location>
        <position position="351"/>
    </location>
</feature>
<feature type="sequence conflict" description="In Ref. 5; AAH01172." evidence="16" ref="5">
    <original>H</original>
    <variation>Y</variation>
    <location>
        <position position="117"/>
    </location>
</feature>
<feature type="sequence conflict" description="In Ref. 6; AAC39902." evidence="16" ref="6">
    <original>P</original>
    <variation>L</variation>
    <location>
        <position position="153"/>
    </location>
</feature>
<feature type="sequence conflict" description="In Ref. 2; AAC26659." evidence="16" ref="2">
    <original>W</original>
    <variation>R</variation>
    <location>
        <position position="185"/>
    </location>
</feature>
<feature type="sequence conflict" description="In Ref. 2; AAC26659." evidence="16" ref="2">
    <original>D</original>
    <variation>N</variation>
    <location>
        <position position="304"/>
    </location>
</feature>
<feature type="sequence conflict" description="In Ref. 2; AAC26659." evidence="16" ref="2">
    <original>D</original>
    <variation>G</variation>
    <location>
        <position position="342"/>
    </location>
</feature>
<feature type="strand" evidence="19">
    <location>
        <begin position="73"/>
        <end position="75"/>
    </location>
</feature>
<feature type="helix" evidence="19">
    <location>
        <begin position="77"/>
        <end position="89"/>
    </location>
</feature>
<feature type="helix" evidence="19">
    <location>
        <begin position="95"/>
        <end position="102"/>
    </location>
</feature>
<feature type="helix" evidence="19">
    <location>
        <begin position="107"/>
        <end position="117"/>
    </location>
</feature>
<protein>
    <recommendedName>
        <fullName>Transcriptional adapter 2-alpha</fullName>
    </recommendedName>
    <alternativeName>
        <fullName>Transcriptional adapter 2-like</fullName>
        <shortName>ADA2-like protein</shortName>
    </alternativeName>
</protein>
<dbReference type="EMBL" id="AF064094">
    <property type="protein sequence ID" value="AAC26659.1"/>
    <property type="molecule type" value="mRNA"/>
</dbReference>
<dbReference type="EMBL" id="AK022767">
    <property type="protein sequence ID" value="BAG51111.1"/>
    <property type="molecule type" value="mRNA"/>
</dbReference>
<dbReference type="EMBL" id="AC004099">
    <property type="status" value="NOT_ANNOTATED_CDS"/>
    <property type="molecule type" value="Genomic_DNA"/>
</dbReference>
<dbReference type="EMBL" id="AC068400">
    <property type="status" value="NOT_ANNOTATED_CDS"/>
    <property type="molecule type" value="Genomic_DNA"/>
</dbReference>
<dbReference type="EMBL" id="AC068447">
    <property type="status" value="NOT_ANNOTATED_CDS"/>
    <property type="molecule type" value="Genomic_DNA"/>
</dbReference>
<dbReference type="EMBL" id="BC001172">
    <property type="protein sequence ID" value="AAH01172.1"/>
    <property type="molecule type" value="mRNA"/>
</dbReference>
<dbReference type="EMBL" id="BC011753">
    <property type="protein sequence ID" value="AAH11753.1"/>
    <property type="molecule type" value="mRNA"/>
</dbReference>
<dbReference type="EMBL" id="AF069732">
    <property type="protein sequence ID" value="AAC39902.1"/>
    <property type="molecule type" value="mRNA"/>
</dbReference>
<dbReference type="CCDS" id="CCDS11319.1">
    <molecule id="O75478-1"/>
</dbReference>
<dbReference type="CCDS" id="CCDS45656.1">
    <molecule id="O75478-2"/>
</dbReference>
<dbReference type="RefSeq" id="NP_001159577.2">
    <property type="nucleotide sequence ID" value="NM_001166105.2"/>
</dbReference>
<dbReference type="RefSeq" id="NP_001278847.1">
    <property type="nucleotide sequence ID" value="NM_001291918.1"/>
</dbReference>
<dbReference type="RefSeq" id="NP_001479.4">
    <property type="nucleotide sequence ID" value="NM_001488.4"/>
</dbReference>
<dbReference type="RefSeq" id="NP_597683.3">
    <property type="nucleotide sequence ID" value="NM_133439.3"/>
</dbReference>
<dbReference type="RefSeq" id="XP_054172991.1">
    <molecule id="O75478-1"/>
    <property type="nucleotide sequence ID" value="XM_054317016.1"/>
</dbReference>
<dbReference type="PDB" id="1X41">
    <property type="method" value="NMR"/>
    <property type="chains" value="A=72-116"/>
</dbReference>
<dbReference type="PDBsum" id="1X41"/>
<dbReference type="SMR" id="O75478"/>
<dbReference type="BioGRID" id="112734">
    <property type="interactions" value="204"/>
</dbReference>
<dbReference type="ComplexPortal" id="CPX-1004">
    <property type="entry name" value="PCAF-containing ATAC complex"/>
</dbReference>
<dbReference type="ComplexPortal" id="CPX-989">
    <property type="entry name" value="PCAF histone acetylase complex"/>
</dbReference>
<dbReference type="ComplexPortal" id="CPX-997">
    <property type="entry name" value="GCN5-containing ATAC complex"/>
</dbReference>
<dbReference type="CORUM" id="O75478"/>
<dbReference type="DIP" id="DIP-28151N"/>
<dbReference type="FunCoup" id="O75478">
    <property type="interactions" value="403"/>
</dbReference>
<dbReference type="IntAct" id="O75478">
    <property type="interactions" value="82"/>
</dbReference>
<dbReference type="MINT" id="O75478"/>
<dbReference type="STRING" id="9606.ENSP00000481091"/>
<dbReference type="iPTMnet" id="O75478"/>
<dbReference type="PhosphoSitePlus" id="O75478"/>
<dbReference type="BioMuta" id="TADA2A"/>
<dbReference type="jPOST" id="O75478"/>
<dbReference type="MassIVE" id="O75478"/>
<dbReference type="PaxDb" id="9606-ENSP00000481091"/>
<dbReference type="PeptideAtlas" id="O75478"/>
<dbReference type="ProteomicsDB" id="50040">
    <molecule id="O75478-1"/>
</dbReference>
<dbReference type="ProteomicsDB" id="50041">
    <molecule id="O75478-2"/>
</dbReference>
<dbReference type="Pumba" id="O75478"/>
<dbReference type="DNASU" id="6871"/>
<dbReference type="Ensembl" id="ENST00000617828.4">
    <molecule id="O75478-1"/>
    <property type="protein sequence ID" value="ENSP00000482484.1"/>
    <property type="gene ID" value="ENSG00000277104.4"/>
</dbReference>
<dbReference type="Ensembl" id="ENST00000622522.2">
    <molecule id="O75478-1"/>
    <property type="protein sequence ID" value="ENSP00000481283.1"/>
    <property type="gene ID" value="ENSG00000277104.4"/>
</dbReference>
<dbReference type="Ensembl" id="ENST00000633468.1">
    <molecule id="O75478-1"/>
    <property type="protein sequence ID" value="ENSP00000488016.1"/>
    <property type="gene ID" value="ENSG00000277104.4"/>
</dbReference>
<dbReference type="Ensembl" id="ENST00000633584.1">
    <molecule id="O75478-2"/>
    <property type="protein sequence ID" value="ENSP00000487973.1"/>
    <property type="gene ID" value="ENSG00000277104.4"/>
</dbReference>
<dbReference type="GeneID" id="6871"/>
<dbReference type="KEGG" id="hsa:6871"/>
<dbReference type="UCSC" id="uc032ghw.2">
    <molecule id="O75478-1"/>
    <property type="organism name" value="human"/>
</dbReference>
<dbReference type="AGR" id="HGNC:11531"/>
<dbReference type="CTD" id="6871"/>
<dbReference type="DisGeNET" id="6871"/>
<dbReference type="GeneCards" id="TADA2A"/>
<dbReference type="HGNC" id="HGNC:11531">
    <property type="gene designation" value="TADA2A"/>
</dbReference>
<dbReference type="MIM" id="602276">
    <property type="type" value="gene"/>
</dbReference>
<dbReference type="neXtProt" id="NX_O75478"/>
<dbReference type="PharmGKB" id="PA36306"/>
<dbReference type="eggNOG" id="KOG0457">
    <property type="taxonomic scope" value="Eukaryota"/>
</dbReference>
<dbReference type="InParanoid" id="O75478"/>
<dbReference type="OrthoDB" id="270417at2759"/>
<dbReference type="PAN-GO" id="O75478">
    <property type="GO annotations" value="7 GO annotations based on evolutionary models"/>
</dbReference>
<dbReference type="PhylomeDB" id="O75478"/>
<dbReference type="TreeFam" id="TF313975"/>
<dbReference type="PathwayCommons" id="O75478"/>
<dbReference type="Reactome" id="R-HSA-3214847">
    <property type="pathway name" value="HATs acetylate histones"/>
</dbReference>
<dbReference type="Reactome" id="R-HSA-9772755">
    <property type="pathway name" value="Formation of WDR5-containing histone-modifying complexes"/>
</dbReference>
<dbReference type="SignaLink" id="O75478"/>
<dbReference type="BioGRID-ORCS" id="6871">
    <property type="hits" value="248 hits in 1184 CRISPR screens"/>
</dbReference>
<dbReference type="ChiTaRS" id="TADA2A">
    <property type="organism name" value="human"/>
</dbReference>
<dbReference type="EvolutionaryTrace" id="O75478"/>
<dbReference type="GeneWiki" id="TADA2L"/>
<dbReference type="GenomeRNAi" id="6871"/>
<dbReference type="Pharos" id="O75478">
    <property type="development level" value="Tbio"/>
</dbReference>
<dbReference type="PRO" id="PR:O75478"/>
<dbReference type="Proteomes" id="UP000005640">
    <property type="component" value="Unplaced"/>
</dbReference>
<dbReference type="RNAct" id="O75478">
    <property type="molecule type" value="protein"/>
</dbReference>
<dbReference type="GO" id="GO:0140672">
    <property type="term" value="C:ATAC complex"/>
    <property type="evidence" value="ECO:0000314"/>
    <property type="project" value="ComplexPortal"/>
</dbReference>
<dbReference type="GO" id="GO:0072686">
    <property type="term" value="C:mitotic spindle"/>
    <property type="evidence" value="ECO:0000303"/>
    <property type="project" value="ComplexPortal"/>
</dbReference>
<dbReference type="GO" id="GO:0005654">
    <property type="term" value="C:nucleoplasm"/>
    <property type="evidence" value="ECO:0000304"/>
    <property type="project" value="Reactome"/>
</dbReference>
<dbReference type="GO" id="GO:0005634">
    <property type="term" value="C:nucleus"/>
    <property type="evidence" value="ECO:0000318"/>
    <property type="project" value="GO_Central"/>
</dbReference>
<dbReference type="GO" id="GO:0000124">
    <property type="term" value="C:SAGA complex"/>
    <property type="evidence" value="ECO:0000314"/>
    <property type="project" value="UniProtKB"/>
</dbReference>
<dbReference type="GO" id="GO:0070461">
    <property type="term" value="C:SAGA-type complex"/>
    <property type="evidence" value="ECO:0000318"/>
    <property type="project" value="GO_Central"/>
</dbReference>
<dbReference type="GO" id="GO:0003682">
    <property type="term" value="F:chromatin binding"/>
    <property type="evidence" value="ECO:0000318"/>
    <property type="project" value="GO_Central"/>
</dbReference>
<dbReference type="GO" id="GO:0003677">
    <property type="term" value="F:DNA binding"/>
    <property type="evidence" value="ECO:0007669"/>
    <property type="project" value="UniProtKB-KW"/>
</dbReference>
<dbReference type="GO" id="GO:0003713">
    <property type="term" value="F:transcription coactivator activity"/>
    <property type="evidence" value="ECO:0000318"/>
    <property type="project" value="GO_Central"/>
</dbReference>
<dbReference type="GO" id="GO:0008270">
    <property type="term" value="F:zinc ion binding"/>
    <property type="evidence" value="ECO:0007669"/>
    <property type="project" value="UniProtKB-KW"/>
</dbReference>
<dbReference type="GO" id="GO:0006338">
    <property type="term" value="P:chromatin remodeling"/>
    <property type="evidence" value="ECO:0000318"/>
    <property type="project" value="GO_Central"/>
</dbReference>
<dbReference type="GO" id="GO:0051726">
    <property type="term" value="P:regulation of cell cycle"/>
    <property type="evidence" value="ECO:0000315"/>
    <property type="project" value="ComplexPortal"/>
</dbReference>
<dbReference type="GO" id="GO:0051302">
    <property type="term" value="P:regulation of cell division"/>
    <property type="evidence" value="ECO:0000314"/>
    <property type="project" value="ComplexPortal"/>
</dbReference>
<dbReference type="GO" id="GO:0006355">
    <property type="term" value="P:regulation of DNA-templated transcription"/>
    <property type="evidence" value="ECO:0000315"/>
    <property type="project" value="ComplexPortal"/>
</dbReference>
<dbReference type="GO" id="GO:0045995">
    <property type="term" value="P:regulation of embryonic development"/>
    <property type="evidence" value="ECO:0000266"/>
    <property type="project" value="ComplexPortal"/>
</dbReference>
<dbReference type="GO" id="GO:0006357">
    <property type="term" value="P:regulation of transcription by RNA polymerase II"/>
    <property type="evidence" value="ECO:0000314"/>
    <property type="project" value="ComplexPortal"/>
</dbReference>
<dbReference type="CDD" id="cd00167">
    <property type="entry name" value="SANT"/>
    <property type="match status" value="1"/>
</dbReference>
<dbReference type="CDD" id="cd02335">
    <property type="entry name" value="ZZ_ADA2"/>
    <property type="match status" value="1"/>
</dbReference>
<dbReference type="FunFam" id="1.10.10.60:FF:000110">
    <property type="entry name" value="Transcriptional adapter"/>
    <property type="match status" value="1"/>
</dbReference>
<dbReference type="FunFam" id="3.30.60.90:FF:000020">
    <property type="entry name" value="Transcriptional adapter"/>
    <property type="match status" value="1"/>
</dbReference>
<dbReference type="FunFam" id="1.10.10.10:FF:000087">
    <property type="entry name" value="Transcriptional adapter 2"/>
    <property type="match status" value="1"/>
</dbReference>
<dbReference type="Gene3D" id="3.30.60.90">
    <property type="match status" value="1"/>
</dbReference>
<dbReference type="Gene3D" id="1.10.10.60">
    <property type="entry name" value="Homeodomain-like"/>
    <property type="match status" value="1"/>
</dbReference>
<dbReference type="Gene3D" id="1.10.10.10">
    <property type="entry name" value="Winged helix-like DNA-binding domain superfamily/Winged helix DNA-binding domain"/>
    <property type="match status" value="1"/>
</dbReference>
<dbReference type="InterPro" id="IPR041983">
    <property type="entry name" value="ADA2-like_ZZ"/>
</dbReference>
<dbReference type="InterPro" id="IPR016827">
    <property type="entry name" value="Ada2/TADA2"/>
</dbReference>
<dbReference type="InterPro" id="IPR009057">
    <property type="entry name" value="Homeodomain-like_sf"/>
</dbReference>
<dbReference type="InterPro" id="IPR017930">
    <property type="entry name" value="Myb_dom"/>
</dbReference>
<dbReference type="InterPro" id="IPR001005">
    <property type="entry name" value="SANT/Myb"/>
</dbReference>
<dbReference type="InterPro" id="IPR017884">
    <property type="entry name" value="SANT_dom"/>
</dbReference>
<dbReference type="InterPro" id="IPR007526">
    <property type="entry name" value="SWIRM"/>
</dbReference>
<dbReference type="InterPro" id="IPR055141">
    <property type="entry name" value="TADA2A_B-like_dom"/>
</dbReference>
<dbReference type="InterPro" id="IPR036388">
    <property type="entry name" value="WH-like_DNA-bd_sf"/>
</dbReference>
<dbReference type="InterPro" id="IPR000433">
    <property type="entry name" value="Znf_ZZ"/>
</dbReference>
<dbReference type="InterPro" id="IPR043145">
    <property type="entry name" value="Znf_ZZ_sf"/>
</dbReference>
<dbReference type="PANTHER" id="PTHR12374:SF20">
    <property type="entry name" value="TRANSCRIPTIONAL ADAPTER 2-ALPHA"/>
    <property type="match status" value="1"/>
</dbReference>
<dbReference type="PANTHER" id="PTHR12374">
    <property type="entry name" value="TRANSCRIPTIONAL ADAPTOR 2 ADA2 -RELATED"/>
    <property type="match status" value="1"/>
</dbReference>
<dbReference type="Pfam" id="PF00249">
    <property type="entry name" value="Myb_DNA-binding"/>
    <property type="match status" value="1"/>
</dbReference>
<dbReference type="Pfam" id="PF04433">
    <property type="entry name" value="SWIRM"/>
    <property type="match status" value="1"/>
</dbReference>
<dbReference type="Pfam" id="PF22941">
    <property type="entry name" value="TADA2A-like_3rd"/>
    <property type="match status" value="1"/>
</dbReference>
<dbReference type="Pfam" id="PF25299">
    <property type="entry name" value="ZZ_ADA2"/>
    <property type="match status" value="1"/>
</dbReference>
<dbReference type="PIRSF" id="PIRSF025024">
    <property type="entry name" value="Transcriptional_adaptor_2"/>
    <property type="match status" value="1"/>
</dbReference>
<dbReference type="SMART" id="SM00717">
    <property type="entry name" value="SANT"/>
    <property type="match status" value="1"/>
</dbReference>
<dbReference type="SUPFAM" id="SSF46689">
    <property type="entry name" value="Homeodomain-like"/>
    <property type="match status" value="2"/>
</dbReference>
<dbReference type="SUPFAM" id="SSF57850">
    <property type="entry name" value="RING/U-box"/>
    <property type="match status" value="1"/>
</dbReference>
<dbReference type="PROSITE" id="PS51293">
    <property type="entry name" value="SANT"/>
    <property type="match status" value="1"/>
</dbReference>
<dbReference type="PROSITE" id="PS50934">
    <property type="entry name" value="SWIRM"/>
    <property type="match status" value="1"/>
</dbReference>
<dbReference type="PROSITE" id="PS50135">
    <property type="entry name" value="ZF_ZZ_2"/>
    <property type="match status" value="1"/>
</dbReference>
<proteinExistence type="evidence at protein level"/>
<reference key="1">
    <citation type="journal article" date="1996" name="Mol. Cell. Biol.">
        <title>Identification of human proteins functionally conserved with the yeast putative adaptors ADA2 and GCN5.</title>
        <authorList>
            <person name="Candau R."/>
            <person name="Moore P.A."/>
            <person name="Wang L."/>
            <person name="Barlev N."/>
            <person name="Ying C.Y."/>
            <person name="Rosen C.A."/>
            <person name="Berger S.L."/>
        </authorList>
    </citation>
    <scope>NUCLEOTIDE SEQUENCE [MRNA] (ISOFORM 1)</scope>
    <scope>CHARACTERIZATION</scope>
    <scope>VARIANT SER-6</scope>
    <source>
        <tissue>Testis</tissue>
    </source>
</reference>
<reference key="2">
    <citation type="submission" date="1998-06" db="EMBL/GenBank/DDBJ databases">
        <title>A novel gene from human dendritic cell.</title>
        <authorList>
            <person name="Huang X."/>
            <person name="Li N."/>
            <person name="Zhao Z."/>
            <person name="Zhu X."/>
            <person name="Cao X."/>
        </authorList>
    </citation>
    <scope>NUCLEOTIDE SEQUENCE [LARGE SCALE MRNA] (ISOFORM 1)</scope>
    <scope>VARIANT SER-6</scope>
    <source>
        <tissue>Dendritic cell</tissue>
    </source>
</reference>
<reference key="3">
    <citation type="journal article" date="2004" name="Nat. Genet.">
        <title>Complete sequencing and characterization of 21,243 full-length human cDNAs.</title>
        <authorList>
            <person name="Ota T."/>
            <person name="Suzuki Y."/>
            <person name="Nishikawa T."/>
            <person name="Otsuki T."/>
            <person name="Sugiyama T."/>
            <person name="Irie R."/>
            <person name="Wakamatsu A."/>
            <person name="Hayashi K."/>
            <person name="Sato H."/>
            <person name="Nagai K."/>
            <person name="Kimura K."/>
            <person name="Makita H."/>
            <person name="Sekine M."/>
            <person name="Obayashi M."/>
            <person name="Nishi T."/>
            <person name="Shibahara T."/>
            <person name="Tanaka T."/>
            <person name="Ishii S."/>
            <person name="Yamamoto J."/>
            <person name="Saito K."/>
            <person name="Kawai Y."/>
            <person name="Isono Y."/>
            <person name="Nakamura Y."/>
            <person name="Nagahari K."/>
            <person name="Murakami K."/>
            <person name="Yasuda T."/>
            <person name="Iwayanagi T."/>
            <person name="Wagatsuma M."/>
            <person name="Shiratori A."/>
            <person name="Sudo H."/>
            <person name="Hosoiri T."/>
            <person name="Kaku Y."/>
            <person name="Kodaira H."/>
            <person name="Kondo H."/>
            <person name="Sugawara M."/>
            <person name="Takahashi M."/>
            <person name="Kanda K."/>
            <person name="Yokoi T."/>
            <person name="Furuya T."/>
            <person name="Kikkawa E."/>
            <person name="Omura Y."/>
            <person name="Abe K."/>
            <person name="Kamihara K."/>
            <person name="Katsuta N."/>
            <person name="Sato K."/>
            <person name="Tanikawa M."/>
            <person name="Yamazaki M."/>
            <person name="Ninomiya K."/>
            <person name="Ishibashi T."/>
            <person name="Yamashita H."/>
            <person name="Murakawa K."/>
            <person name="Fujimori K."/>
            <person name="Tanai H."/>
            <person name="Kimata M."/>
            <person name="Watanabe M."/>
            <person name="Hiraoka S."/>
            <person name="Chiba Y."/>
            <person name="Ishida S."/>
            <person name="Ono Y."/>
            <person name="Takiguchi S."/>
            <person name="Watanabe S."/>
            <person name="Yosida M."/>
            <person name="Hotuta T."/>
            <person name="Kusano J."/>
            <person name="Kanehori K."/>
            <person name="Takahashi-Fujii A."/>
            <person name="Hara H."/>
            <person name="Tanase T.-O."/>
            <person name="Nomura Y."/>
            <person name="Togiya S."/>
            <person name="Komai F."/>
            <person name="Hara R."/>
            <person name="Takeuchi K."/>
            <person name="Arita M."/>
            <person name="Imose N."/>
            <person name="Musashino K."/>
            <person name="Yuuki H."/>
            <person name="Oshima A."/>
            <person name="Sasaki N."/>
            <person name="Aotsuka S."/>
            <person name="Yoshikawa Y."/>
            <person name="Matsunawa H."/>
            <person name="Ichihara T."/>
            <person name="Shiohata N."/>
            <person name="Sano S."/>
            <person name="Moriya S."/>
            <person name="Momiyama H."/>
            <person name="Satoh N."/>
            <person name="Takami S."/>
            <person name="Terashima Y."/>
            <person name="Suzuki O."/>
            <person name="Nakagawa S."/>
            <person name="Senoh A."/>
            <person name="Mizoguchi H."/>
            <person name="Goto Y."/>
            <person name="Shimizu F."/>
            <person name="Wakebe H."/>
            <person name="Hishigaki H."/>
            <person name="Watanabe T."/>
            <person name="Sugiyama A."/>
            <person name="Takemoto M."/>
            <person name="Kawakami B."/>
            <person name="Yamazaki M."/>
            <person name="Watanabe K."/>
            <person name="Kumagai A."/>
            <person name="Itakura S."/>
            <person name="Fukuzumi Y."/>
            <person name="Fujimori Y."/>
            <person name="Komiyama M."/>
            <person name="Tashiro H."/>
            <person name="Tanigami A."/>
            <person name="Fujiwara T."/>
            <person name="Ono T."/>
            <person name="Yamada K."/>
            <person name="Fujii Y."/>
            <person name="Ozaki K."/>
            <person name="Hirao M."/>
            <person name="Ohmori Y."/>
            <person name="Kawabata A."/>
            <person name="Hikiji T."/>
            <person name="Kobatake N."/>
            <person name="Inagaki H."/>
            <person name="Ikema Y."/>
            <person name="Okamoto S."/>
            <person name="Okitani R."/>
            <person name="Kawakami T."/>
            <person name="Noguchi S."/>
            <person name="Itoh T."/>
            <person name="Shigeta K."/>
            <person name="Senba T."/>
            <person name="Matsumura K."/>
            <person name="Nakajima Y."/>
            <person name="Mizuno T."/>
            <person name="Morinaga M."/>
            <person name="Sasaki M."/>
            <person name="Togashi T."/>
            <person name="Oyama M."/>
            <person name="Hata H."/>
            <person name="Watanabe M."/>
            <person name="Komatsu T."/>
            <person name="Mizushima-Sugano J."/>
            <person name="Satoh T."/>
            <person name="Shirai Y."/>
            <person name="Takahashi Y."/>
            <person name="Nakagawa K."/>
            <person name="Okumura K."/>
            <person name="Nagase T."/>
            <person name="Nomura N."/>
            <person name="Kikuchi H."/>
            <person name="Masuho Y."/>
            <person name="Yamashita R."/>
            <person name="Nakai K."/>
            <person name="Yada T."/>
            <person name="Nakamura Y."/>
            <person name="Ohara O."/>
            <person name="Isogai T."/>
            <person name="Sugano S."/>
        </authorList>
    </citation>
    <scope>NUCLEOTIDE SEQUENCE [LARGE SCALE MRNA] (ISOFORM 1)</scope>
    <scope>VARIANTS SER-6 AND VAL-115</scope>
</reference>
<reference key="4">
    <citation type="journal article" date="2006" name="Nature">
        <title>DNA sequence of human chromosome 17 and analysis of rearrangement in the human lineage.</title>
        <authorList>
            <person name="Zody M.C."/>
            <person name="Garber M."/>
            <person name="Adams D.J."/>
            <person name="Sharpe T."/>
            <person name="Harrow J."/>
            <person name="Lupski J.R."/>
            <person name="Nicholson C."/>
            <person name="Searle S.M."/>
            <person name="Wilming L."/>
            <person name="Young S.K."/>
            <person name="Abouelleil A."/>
            <person name="Allen N.R."/>
            <person name="Bi W."/>
            <person name="Bloom T."/>
            <person name="Borowsky M.L."/>
            <person name="Bugalter B.E."/>
            <person name="Butler J."/>
            <person name="Chang J.L."/>
            <person name="Chen C.-K."/>
            <person name="Cook A."/>
            <person name="Corum B."/>
            <person name="Cuomo C.A."/>
            <person name="de Jong P.J."/>
            <person name="DeCaprio D."/>
            <person name="Dewar K."/>
            <person name="FitzGerald M."/>
            <person name="Gilbert J."/>
            <person name="Gibson R."/>
            <person name="Gnerre S."/>
            <person name="Goldstein S."/>
            <person name="Grafham D.V."/>
            <person name="Grocock R."/>
            <person name="Hafez N."/>
            <person name="Hagopian D.S."/>
            <person name="Hart E."/>
            <person name="Norman C.H."/>
            <person name="Humphray S."/>
            <person name="Jaffe D.B."/>
            <person name="Jones M."/>
            <person name="Kamal M."/>
            <person name="Khodiyar V.K."/>
            <person name="LaButti K."/>
            <person name="Laird G."/>
            <person name="Lehoczky J."/>
            <person name="Liu X."/>
            <person name="Lokyitsang T."/>
            <person name="Loveland J."/>
            <person name="Lui A."/>
            <person name="Macdonald P."/>
            <person name="Major J.E."/>
            <person name="Matthews L."/>
            <person name="Mauceli E."/>
            <person name="McCarroll S.A."/>
            <person name="Mihalev A.H."/>
            <person name="Mudge J."/>
            <person name="Nguyen C."/>
            <person name="Nicol R."/>
            <person name="O'Leary S.B."/>
            <person name="Osoegawa K."/>
            <person name="Schwartz D.C."/>
            <person name="Shaw-Smith C."/>
            <person name="Stankiewicz P."/>
            <person name="Steward C."/>
            <person name="Swarbreck D."/>
            <person name="Venkataraman V."/>
            <person name="Whittaker C.A."/>
            <person name="Yang X."/>
            <person name="Zimmer A.R."/>
            <person name="Bradley A."/>
            <person name="Hubbard T."/>
            <person name="Birren B.W."/>
            <person name="Rogers J."/>
            <person name="Lander E.S."/>
            <person name="Nusbaum C."/>
        </authorList>
    </citation>
    <scope>NUCLEOTIDE SEQUENCE [LARGE SCALE GENOMIC DNA]</scope>
</reference>
<reference key="5">
    <citation type="journal article" date="2004" name="Genome Res.">
        <title>The status, quality, and expansion of the NIH full-length cDNA project: the Mammalian Gene Collection (MGC).</title>
        <authorList>
            <consortium name="The MGC Project Team"/>
        </authorList>
    </citation>
    <scope>NUCLEOTIDE SEQUENCE [LARGE SCALE MRNA] (ISOFORMS 1 AND 2)</scope>
    <scope>VARIANT SER-6</scope>
    <source>
        <tissue>Eye</tissue>
        <tissue>Muscle</tissue>
    </source>
</reference>
<reference key="6">
    <citation type="journal article" date="1998" name="Cell">
        <title>Histone-like TAFs within the PCAF histone acetylase complex.</title>
        <authorList>
            <person name="Ogryzko V.V."/>
            <person name="Kotani T."/>
            <person name="Zhang X."/>
            <person name="Schiltz R.L."/>
            <person name="Howard T."/>
            <person name="Yang X.-J."/>
            <person name="Howard B.H."/>
            <person name="Qin J."/>
            <person name="Nakatani Y."/>
        </authorList>
    </citation>
    <scope>NUCLEOTIDE SEQUENCE [MRNA] OF 81-443</scope>
    <scope>IDENTIFICATION BY MASS SPECTROMETRY</scope>
</reference>
<reference key="7">
    <citation type="journal article" date="1997" name="Mol. Cell. Biol.">
        <title>Role of the Ada adaptor complex in gene activation by the glucocorticoid receptor.</title>
        <authorList>
            <person name="Henriksson A."/>
            <person name="Almloef T."/>
            <person name="Ford J."/>
            <person name="McEwan I.J."/>
            <person name="Gustafsson J.-A."/>
            <person name="Wright A.P.H."/>
        </authorList>
    </citation>
    <scope>INTERACTION WITH NR3C1</scope>
</reference>
<reference key="8">
    <citation type="journal article" date="1998" name="Mol. Cell">
        <title>The 400 kDa subunit of the PCAF histone acetylase complex belongs to the ATM superfamily.</title>
        <authorList>
            <person name="Vassilev A."/>
            <person name="Yamauchi J."/>
            <person name="Kotani T."/>
            <person name="Prives C."/>
            <person name="Avantaggiati M.L."/>
            <person name="Qin J."/>
            <person name="Nakatani Y."/>
        </authorList>
    </citation>
    <scope>IDENTIFICATION IN THE PCAF COMPLEX WITH TRRAP; TADA3L; TAF5L; SUPT3H; TAF6L; TAF10; TAF12 AND TAF9</scope>
</reference>
<reference key="9">
    <citation type="journal article" date="2009" name="Mol. Cell. Biol.">
        <title>The double-histone-acetyltransferase complex ATAC is essential for mammalian development.</title>
        <authorList>
            <person name="Guelman S."/>
            <person name="Kozuka K."/>
            <person name="Mao Y."/>
            <person name="Pham V."/>
            <person name="Solloway M.J."/>
            <person name="Wang J."/>
            <person name="Wu J."/>
            <person name="Lill J.R."/>
            <person name="Zha J."/>
        </authorList>
    </citation>
    <scope>FUNCTION</scope>
    <scope>IDENTIFICATION IN ATAC COMPLEX</scope>
</reference>
<reference key="10">
    <citation type="journal article" date="2012" name="Histochem. Cell Biol.">
        <title>CCDC134 interacts with hADA2a and functions as a regulator of hADA2a in acetyltransferase activity, DNA damage-induced apoptosis and cell cycle arrest.</title>
        <authorList>
            <person name="Huang J."/>
            <person name="Zhang L."/>
            <person name="Liu W."/>
            <person name="Liao Q."/>
            <person name="Shi T."/>
            <person name="Xiao L."/>
            <person name="Hu F."/>
            <person name="Qiu X."/>
        </authorList>
    </citation>
    <scope>FUNCTION</scope>
    <scope>INTERACTION WITH CCDC134</scope>
    <scope>SUBCELLULAR LOCATION</scope>
</reference>
<reference key="11">
    <citation type="journal article" date="2017" name="Nat. Struct. Mol. Biol.">
        <title>Site-specific mapping of the human SUMO proteome reveals co-modification with phosphorylation.</title>
        <authorList>
            <person name="Hendriks I.A."/>
            <person name="Lyon D."/>
            <person name="Young C."/>
            <person name="Jensen L.J."/>
            <person name="Vertegaal A.C."/>
            <person name="Nielsen M.L."/>
        </authorList>
    </citation>
    <scope>SUMOYLATION [LARGE SCALE ANALYSIS] AT LYS-132 AND LYS-138</scope>
    <scope>IDENTIFICATION BY MASS SPECTROMETRY [LARGE SCALE ANALYSIS]</scope>
</reference>
<reference key="12">
    <citation type="submission" date="2005-11" db="PDB data bank">
        <title>Solution structure of the Myb-like DNA binding domain of human transcriptional adaptor 2-like, isoform B.</title>
        <authorList>
            <consortium name="RIKEN structural genomics initiative (RSGI)"/>
        </authorList>
    </citation>
    <scope>STRUCTURE BY NMR OF 72-118</scope>
</reference>
<reference key="13">
    <citation type="journal article" date="2013" name="J. Proteome Res.">
        <title>Toward a comprehensive characterization of a human cancer cell phosphoproteome.</title>
        <authorList>
            <person name="Zhou H."/>
            <person name="Di Palma S."/>
            <person name="Preisinger C."/>
            <person name="Peng M."/>
            <person name="Polat A.N."/>
            <person name="Heck A.J."/>
            <person name="Mohammed S."/>
        </authorList>
    </citation>
    <scope>PHOSPHORYLATION [LARGE SCALE ANALYSIS] AT SER-6 (VARIANT SER-6)</scope>
    <scope>VARIANT [LARGE SCALE ANALYSIS] SER-6</scope>
    <scope>IDENTIFICATION BY MASS SPECTROMETRY [LARGE SCALE ANALYSIS]</scope>
    <source>
        <tissue>Erythroleukemia</tissue>
    </source>
</reference>